<proteinExistence type="evidence at protein level"/>
<evidence type="ECO:0000250" key="1"/>
<evidence type="ECO:0000255" key="2"/>
<evidence type="ECO:0000269" key="3">
    <source>
    </source>
</evidence>
<evidence type="ECO:0000305" key="4"/>
<accession>Q5UQ90</accession>
<organism>
    <name type="scientific">Acanthamoeba polyphaga mimivirus</name>
    <name type="common">APMV</name>
    <dbReference type="NCBI Taxonomy" id="212035"/>
    <lineage>
        <taxon>Viruses</taxon>
        <taxon>Varidnaviria</taxon>
        <taxon>Bamfordvirae</taxon>
        <taxon>Nucleocytoviricota</taxon>
        <taxon>Megaviricetes</taxon>
        <taxon>Imitervirales</taxon>
        <taxon>Mimiviridae</taxon>
        <taxon>Megamimivirinae</taxon>
        <taxon>Mimivirus</taxon>
        <taxon>Mimivirus bradfordmassiliense</taxon>
    </lineage>
</organism>
<reference key="1">
    <citation type="journal article" date="2004" name="Science">
        <title>The 1.2-megabase genome sequence of Mimivirus.</title>
        <authorList>
            <person name="Raoult D."/>
            <person name="Audic S."/>
            <person name="Robert C."/>
            <person name="Abergel C."/>
            <person name="Renesto P."/>
            <person name="Ogata H."/>
            <person name="La Scola B."/>
            <person name="Susan M."/>
            <person name="Claverie J.-M."/>
        </authorList>
    </citation>
    <scope>NUCLEOTIDE SEQUENCE [GENOMIC DNA]</scope>
    <source>
        <strain>Rowbotham-Bradford</strain>
    </source>
</reference>
<reference key="2">
    <citation type="journal article" date="2006" name="J. Virol.">
        <title>Mimivirus giant particles incorporate a large fraction of anonymous and unique gene products.</title>
        <authorList>
            <person name="Renesto P."/>
            <person name="Abergel C."/>
            <person name="Decloquement P."/>
            <person name="Moinier D."/>
            <person name="Azza S."/>
            <person name="Ogata H."/>
            <person name="Fourquet P."/>
            <person name="Gorvel J.-P."/>
            <person name="Claverie J.-M."/>
            <person name="Raoult D."/>
        </authorList>
    </citation>
    <scope>IDENTIFICATION BY MASS SPECTROMETRY [LARGE SCALE ANALYSIS]</scope>
    <scope>SUBCELLULAR LOCATION</scope>
</reference>
<organismHost>
    <name type="scientific">Acanthamoeba polyphaga</name>
    <name type="common">Amoeba</name>
    <dbReference type="NCBI Taxonomy" id="5757"/>
</organismHost>
<dbReference type="EC" id="1.14.14.-"/>
<dbReference type="EMBL" id="AY653733">
    <property type="protein sequence ID" value="AAV50796.1"/>
    <property type="molecule type" value="Genomic_DNA"/>
</dbReference>
<dbReference type="SMR" id="Q5UQ90"/>
<dbReference type="Proteomes" id="UP000001134">
    <property type="component" value="Genome"/>
</dbReference>
<dbReference type="GO" id="GO:0033644">
    <property type="term" value="C:host cell membrane"/>
    <property type="evidence" value="ECO:0007669"/>
    <property type="project" value="UniProtKB-SubCell"/>
</dbReference>
<dbReference type="GO" id="GO:0016020">
    <property type="term" value="C:membrane"/>
    <property type="evidence" value="ECO:0007669"/>
    <property type="project" value="UniProtKB-KW"/>
</dbReference>
<dbReference type="GO" id="GO:0044423">
    <property type="term" value="C:virion component"/>
    <property type="evidence" value="ECO:0007669"/>
    <property type="project" value="UniProtKB-KW"/>
</dbReference>
<dbReference type="GO" id="GO:0020037">
    <property type="term" value="F:heme binding"/>
    <property type="evidence" value="ECO:0007669"/>
    <property type="project" value="InterPro"/>
</dbReference>
<dbReference type="GO" id="GO:0005506">
    <property type="term" value="F:iron ion binding"/>
    <property type="evidence" value="ECO:0007669"/>
    <property type="project" value="InterPro"/>
</dbReference>
<dbReference type="GO" id="GO:0004497">
    <property type="term" value="F:monooxygenase activity"/>
    <property type="evidence" value="ECO:0007669"/>
    <property type="project" value="UniProtKB-KW"/>
</dbReference>
<dbReference type="GO" id="GO:0016705">
    <property type="term" value="F:oxidoreductase activity, acting on paired donors, with incorporation or reduction of molecular oxygen"/>
    <property type="evidence" value="ECO:0007669"/>
    <property type="project" value="InterPro"/>
</dbReference>
<dbReference type="CDD" id="cd00302">
    <property type="entry name" value="cytochrome_P450"/>
    <property type="match status" value="1"/>
</dbReference>
<dbReference type="Gene3D" id="1.10.630.10">
    <property type="entry name" value="Cytochrome P450"/>
    <property type="match status" value="1"/>
</dbReference>
<dbReference type="InterPro" id="IPR001128">
    <property type="entry name" value="Cyt_P450"/>
</dbReference>
<dbReference type="InterPro" id="IPR002403">
    <property type="entry name" value="Cyt_P450_E_grp-IV"/>
</dbReference>
<dbReference type="InterPro" id="IPR036396">
    <property type="entry name" value="Cyt_P450_sf"/>
</dbReference>
<dbReference type="InterPro" id="IPR050196">
    <property type="entry name" value="Cytochrome_P450_Monoox"/>
</dbReference>
<dbReference type="PANTHER" id="PTHR24291:SF50">
    <property type="entry name" value="BIFUNCTIONAL ALBAFLAVENONE MONOOXYGENASE_TERPENE SYNTHASE"/>
    <property type="match status" value="1"/>
</dbReference>
<dbReference type="PANTHER" id="PTHR24291">
    <property type="entry name" value="CYTOCHROME P450 FAMILY 4"/>
    <property type="match status" value="1"/>
</dbReference>
<dbReference type="Pfam" id="PF00067">
    <property type="entry name" value="p450"/>
    <property type="match status" value="1"/>
</dbReference>
<dbReference type="PRINTS" id="PR00465">
    <property type="entry name" value="EP450IV"/>
</dbReference>
<dbReference type="SUPFAM" id="SSF48264">
    <property type="entry name" value="Cytochrome P450"/>
    <property type="match status" value="1"/>
</dbReference>
<comment type="cofactor">
    <cofactor evidence="1">
        <name>heme</name>
        <dbReference type="ChEBI" id="CHEBI:30413"/>
    </cofactor>
</comment>
<comment type="subcellular location">
    <subcellularLocation>
        <location evidence="4">Host membrane</location>
        <topology evidence="4">Multi-pass membrane protein</topology>
    </subcellularLocation>
    <subcellularLocation>
        <location evidence="3">Virion</location>
    </subcellularLocation>
</comment>
<comment type="similarity">
    <text evidence="4">Belongs to the cytochrome P450 family.</text>
</comment>
<sequence length="468" mass="54115">MVLSDILFSIYEHREKSPVFSWFAYLLRILDWIIQFLSFGLIPSIGGDLYDLVDNGLFKFVLDRNIQKKQNQLYDKFRLGTVKMCLVFDGELTKKLLLDNSIRRGGLYNLLTKFFGKGIFTSNIHSRWMKQRKAIFKLFSPQNLIQITPELTTSMFEELDRLITIKKDLDLVTVLSLIGLVGFCKVIFGVDVTDMSEELIEPLNDLLIYINGAVEPVLITADPSYRRFITNKKFVHNWMRKLIDKARKSENCFEIMRQQLDDIGSDDETELIEFILSVVLGGHETTARLMLGIIYSVCHNKEIIEKLNNETDEYPKGDYINLKKRPYLNNIIKEGTRLFPPVWLLSREAKNDTTIDNHFFKKGTQFLISPLIILRDYNVWGSNAEKFDPERFSNMDPKSKASKLYIPFIVGSEDCPGKKFAILESAIVVSKLFKEYEITVLKHKLNPMSAGTFRLSDKLPVSIKKLKN</sequence>
<keyword id="KW-0349">Heme</keyword>
<keyword id="KW-1043">Host membrane</keyword>
<keyword id="KW-0408">Iron</keyword>
<keyword id="KW-0472">Membrane</keyword>
<keyword id="KW-0479">Metal-binding</keyword>
<keyword id="KW-0503">Monooxygenase</keyword>
<keyword id="KW-0560">Oxidoreductase</keyword>
<keyword id="KW-1185">Reference proteome</keyword>
<keyword id="KW-0812">Transmembrane</keyword>
<keyword id="KW-1133">Transmembrane helix</keyword>
<keyword id="KW-0946">Virion</keyword>
<protein>
    <recommendedName>
        <fullName>Cytochrome P450-like protein L532</fullName>
        <ecNumber>1.14.14.-</ecNumber>
    </recommendedName>
</protein>
<name>YL532_MIMIV</name>
<feature type="chain" id="PRO_0000253240" description="Cytochrome P450-like protein L532">
    <location>
        <begin position="1"/>
        <end position="468"/>
    </location>
</feature>
<feature type="transmembrane region" description="Helical" evidence="2">
    <location>
        <begin position="22"/>
        <end position="42"/>
    </location>
</feature>
<feature type="transmembrane region" description="Helical" evidence="2">
    <location>
        <begin position="172"/>
        <end position="192"/>
    </location>
</feature>
<feature type="binding site" description="axial binding residue" evidence="1">
    <location>
        <position position="415"/>
    </location>
    <ligand>
        <name>heme</name>
        <dbReference type="ChEBI" id="CHEBI:30413"/>
    </ligand>
    <ligandPart>
        <name>Fe</name>
        <dbReference type="ChEBI" id="CHEBI:18248"/>
    </ligandPart>
</feature>
<gene>
    <name type="ordered locus">MIMI_L532</name>
</gene>